<organism>
    <name type="scientific">Streptococcus pneumoniae serotype 4 (strain ATCC BAA-334 / TIGR4)</name>
    <dbReference type="NCBI Taxonomy" id="170187"/>
    <lineage>
        <taxon>Bacteria</taxon>
        <taxon>Bacillati</taxon>
        <taxon>Bacillota</taxon>
        <taxon>Bacilli</taxon>
        <taxon>Lactobacillales</taxon>
        <taxon>Streptococcaceae</taxon>
        <taxon>Streptococcus</taxon>
    </lineage>
</organism>
<name>PEZT_STRPN</name>
<gene>
    <name type="primary">pezT</name>
    <name type="ordered locus">SP_1051</name>
</gene>
<protein>
    <recommendedName>
        <fullName>Toxin PezT</fullName>
    </recommendedName>
    <alternativeName>
        <fullName>UDP-N-acetylglucosamine kinase</fullName>
        <shortName>UNAG kinase</shortName>
        <ecNumber>2.7.1.176</ecNumber>
    </alternativeName>
    <alternativeName>
        <fullName>Zeta toxin</fullName>
    </alternativeName>
</protein>
<sequence>MEIQDYTDSEFKHALARNLRSLTRGKKSSKQPIAILLGGQSGAGKTTIHRIKQKEFQGNIVIIDGDSFRSQHPHYLELQQEYGKDSVEYTKDFAGKMVESLVTKLSSLRYNLLIEGTLRTVDVPKKTAQLLKNKGYEVQLALIATKPELSYLSTLIRYEELYIINPNQARATPKEHHDFIVNHLVDNTRKLEELAIFERIQIYQRDRSCVYDSKENTTSAADVLQELLFGEWSQVEKEMLQVGEKRLNELLEK</sequence>
<evidence type="ECO:0000269" key="1">
    <source>
    </source>
</evidence>
<evidence type="ECO:0000269" key="2">
    <source>
    </source>
</evidence>
<evidence type="ECO:0000269" key="3">
    <source>
    </source>
</evidence>
<evidence type="ECO:0000269" key="4">
    <source>
    </source>
</evidence>
<evidence type="ECO:0000305" key="5"/>
<evidence type="ECO:0000305" key="6">
    <source>
    </source>
</evidence>
<evidence type="ECO:0007829" key="7">
    <source>
        <dbReference type="PDB" id="2P5T"/>
    </source>
</evidence>
<accession>Q97QZ1</accession>
<proteinExistence type="evidence at protein level"/>
<comment type="function">
    <text>Toxic component of a type II toxin-antitoxin (TA) system. Phosphorylates UDP-N-acetyl-D-glucosamine (UNAG) on the 3'-hydroxyl group of the N-acetyl-D-glucosamine moiety, yielding UNAG-3P. UNAG-3P inhibits MurA, the first committed step in cell wall synthesis, which is then blocked. Upon expression in E.coli results in decreased cell growth and viability, followed 3 hours later by growth restoration; the toxic effect and phosphorylation of UNAG are neutralized by coexpression with cognate antitoxin PezA. A mutant lacking the last 11 residues is stably maintained in E.coli, unlike the wild-type which undergoes spontaneous mutation. Expression of the deletion mutant in rapidly growing liquid cultures leads to cell bulging, permeabilization and massive lysis by 1 hour. Cells that survive are not able to undergo cytokinesis. Expression in slowly growing cells leads to bulging but not lysis.</text>
</comment>
<comment type="function">
    <text>Acts as a corepressor of its own operon with PezA; it is not clear if it binds DNA alone.</text>
</comment>
<comment type="catalytic activity">
    <reaction>
        <text>UDP-N-acetyl-alpha-D-glucosamine + ATP = UDP-N-acetyl-alpha-D-glucosamine 3'-phosphate + ADP + H(+)</text>
        <dbReference type="Rhea" id="RHEA:32671"/>
        <dbReference type="ChEBI" id="CHEBI:15378"/>
        <dbReference type="ChEBI" id="CHEBI:30616"/>
        <dbReference type="ChEBI" id="CHEBI:57705"/>
        <dbReference type="ChEBI" id="CHEBI:64353"/>
        <dbReference type="ChEBI" id="CHEBI:456216"/>
        <dbReference type="EC" id="2.7.1.176"/>
    </reaction>
</comment>
<comment type="subunit">
    <text evidence="2 3">Forms a PezA(2)PezT(2) heterotetramer. The heterotetramer is much more stable than either of the proteins alone, and a specific mechanism may be necessary to liberate the toxin.</text>
</comment>
<comment type="induction">
    <text>Conflicting data is available; found to be a member of the pezAT operon (upon ectopic expression in E.coli); in S.pneumoniae strain 0100993 is found in an operon with the 2 following genes (SP_1052 and SP_1053).</text>
</comment>
<comment type="disruption phenotype">
    <text evidence="1">Strains with a pezT/SP_1052/SP_1053 disruption have partially attenuated virulence, they take longer to develop a terminal infection in mice, although they grow normally in liquid culture. A double SP_1052/SP_1053 disruption grows almost as well as wild-type, showing the effect is mostly due to disruption of pezT.</text>
</comment>
<comment type="similarity">
    <text evidence="5">Belongs to the zeta toxin family.</text>
</comment>
<dbReference type="EC" id="2.7.1.176"/>
<dbReference type="EMBL" id="AE005672">
    <property type="protein sequence ID" value="AAK75165.1"/>
    <property type="molecule type" value="Genomic_DNA"/>
</dbReference>
<dbReference type="PIR" id="D95121">
    <property type="entry name" value="D95121"/>
</dbReference>
<dbReference type="RefSeq" id="WP_000405360.1">
    <property type="nucleotide sequence ID" value="NZ_CP155539.1"/>
</dbReference>
<dbReference type="PDB" id="2P5T">
    <property type="method" value="X-ray"/>
    <property type="resolution" value="3.20 A"/>
    <property type="chains" value="B/D/F/H=1-253"/>
</dbReference>
<dbReference type="PDBsum" id="2P5T"/>
<dbReference type="SMR" id="Q97QZ1"/>
<dbReference type="DIP" id="DIP-58971N"/>
<dbReference type="IntAct" id="Q97QZ1">
    <property type="interactions" value="1"/>
</dbReference>
<dbReference type="PaxDb" id="170187-SP_1051"/>
<dbReference type="EnsemblBacteria" id="AAK75165">
    <property type="protein sequence ID" value="AAK75165"/>
    <property type="gene ID" value="SP_1051"/>
</dbReference>
<dbReference type="KEGG" id="spn:SP_1051"/>
<dbReference type="eggNOG" id="COG0542">
    <property type="taxonomic scope" value="Bacteria"/>
</dbReference>
<dbReference type="PhylomeDB" id="Q97QZ1"/>
<dbReference type="BioCyc" id="SPNE170187:G1FZB-1080-MONOMER"/>
<dbReference type="BRENDA" id="2.7.1.176">
    <property type="organism ID" value="1960"/>
</dbReference>
<dbReference type="EvolutionaryTrace" id="Q97QZ1"/>
<dbReference type="Proteomes" id="UP000000585">
    <property type="component" value="Chromosome"/>
</dbReference>
<dbReference type="GO" id="GO:0005524">
    <property type="term" value="F:ATP binding"/>
    <property type="evidence" value="ECO:0007669"/>
    <property type="project" value="UniProtKB-KW"/>
</dbReference>
<dbReference type="GO" id="GO:0016301">
    <property type="term" value="F:kinase activity"/>
    <property type="evidence" value="ECO:0007669"/>
    <property type="project" value="UniProtKB-KW"/>
</dbReference>
<dbReference type="Gene3D" id="3.40.50.300">
    <property type="entry name" value="P-loop containing nucleotide triphosphate hydrolases"/>
    <property type="match status" value="1"/>
</dbReference>
<dbReference type="InterPro" id="IPR027417">
    <property type="entry name" value="P-loop_NTPase"/>
</dbReference>
<dbReference type="InterPro" id="IPR048180">
    <property type="entry name" value="PezT"/>
</dbReference>
<dbReference type="InterPro" id="IPR010488">
    <property type="entry name" value="Zeta_toxin_domain"/>
</dbReference>
<dbReference type="NCBIfam" id="NF041574">
    <property type="entry name" value="antitoxPezT_Strep"/>
    <property type="match status" value="1"/>
</dbReference>
<dbReference type="Pfam" id="PF06414">
    <property type="entry name" value="Zeta_toxin"/>
    <property type="match status" value="1"/>
</dbReference>
<dbReference type="SUPFAM" id="SSF52540">
    <property type="entry name" value="P-loop containing nucleoside triphosphate hydrolases"/>
    <property type="match status" value="1"/>
</dbReference>
<feature type="chain" id="PRO_0000410967" description="Toxin PezT">
    <location>
        <begin position="1"/>
        <end position="253"/>
    </location>
</feature>
<feature type="active site" description="Proton acceptor" evidence="5">
    <location>
        <position position="66"/>
    </location>
</feature>
<feature type="binding site" evidence="6">
    <location>
        <begin position="39"/>
        <end position="46"/>
    </location>
    <ligand>
        <name>ATP</name>
        <dbReference type="ChEBI" id="CHEBI:30616"/>
    </ligand>
</feature>
<feature type="mutagenesis site" description="Abolishes lethality." evidence="2">
    <original>K</original>
    <variation>A</variation>
    <location>
        <position position="45"/>
    </location>
</feature>
<feature type="mutagenesis site" description="Abolishes lethality." evidence="2">
    <original>D</original>
    <variation>T</variation>
    <location>
        <position position="66"/>
    </location>
</feature>
<feature type="mutagenesis site" description="Abolishes lethality." evidence="2">
    <original>T</original>
    <variation>V</variation>
    <location>
        <position position="117"/>
    </location>
</feature>
<feature type="mutagenesis site" description="Very slight reduction in toxic effect." evidence="2">
    <original>T</original>
    <variation>V</variation>
    <location>
        <position position="120"/>
    </location>
</feature>
<feature type="mutagenesis site" description="Abolishes lethality." evidence="2">
    <original>R</original>
    <variation>A</variation>
    <location>
        <position position="157"/>
    </location>
</feature>
<feature type="mutagenesis site" description="Abolishes lethality." evidence="2">
    <original>R</original>
    <variation>A</variation>
    <location>
        <position position="170"/>
    </location>
</feature>
<feature type="mutagenesis site" description="Retains toxicity while being stably maintained in E.coli." evidence="4">
    <location>
        <begin position="243"/>
        <end position="253"/>
    </location>
</feature>
<feature type="helix" evidence="7">
    <location>
        <begin position="8"/>
        <end position="23"/>
    </location>
</feature>
<feature type="strand" evidence="7">
    <location>
        <begin position="33"/>
        <end position="39"/>
    </location>
</feature>
<feature type="helix" evidence="7">
    <location>
        <begin position="41"/>
        <end position="43"/>
    </location>
</feature>
<feature type="helix" evidence="7">
    <location>
        <begin position="46"/>
        <end position="55"/>
    </location>
</feature>
<feature type="turn" evidence="7">
    <location>
        <begin position="56"/>
        <end position="58"/>
    </location>
</feature>
<feature type="strand" evidence="7">
    <location>
        <begin position="61"/>
        <end position="63"/>
    </location>
</feature>
<feature type="helix" evidence="7">
    <location>
        <begin position="65"/>
        <end position="69"/>
    </location>
</feature>
<feature type="helix" evidence="7">
    <location>
        <begin position="75"/>
        <end position="79"/>
    </location>
</feature>
<feature type="helix" evidence="7">
    <location>
        <begin position="87"/>
        <end position="107"/>
    </location>
</feature>
<feature type="strand" evidence="7">
    <location>
        <begin position="112"/>
        <end position="115"/>
    </location>
</feature>
<feature type="helix" evidence="7">
    <location>
        <begin position="122"/>
        <end position="133"/>
    </location>
</feature>
<feature type="strand" evidence="7">
    <location>
        <begin position="137"/>
        <end position="143"/>
    </location>
</feature>
<feature type="helix" evidence="7">
    <location>
        <begin position="147"/>
        <end position="160"/>
    </location>
</feature>
<feature type="turn" evidence="7">
    <location>
        <begin position="161"/>
        <end position="163"/>
    </location>
</feature>
<feature type="helix" evidence="7">
    <location>
        <begin position="181"/>
        <end position="193"/>
    </location>
</feature>
<feature type="strand" evidence="7">
    <location>
        <begin position="198"/>
        <end position="203"/>
    </location>
</feature>
<feature type="strand" evidence="7">
    <location>
        <begin position="209"/>
        <end position="212"/>
    </location>
</feature>
<feature type="turn" evidence="7">
    <location>
        <begin position="213"/>
        <end position="215"/>
    </location>
</feature>
<feature type="helix" evidence="7">
    <location>
        <begin position="220"/>
        <end position="229"/>
    </location>
</feature>
<feature type="helix" evidence="7">
    <location>
        <begin position="234"/>
        <end position="250"/>
    </location>
</feature>
<keyword id="KW-0002">3D-structure</keyword>
<keyword id="KW-0067">ATP-binding</keyword>
<keyword id="KW-0418">Kinase</keyword>
<keyword id="KW-0547">Nucleotide-binding</keyword>
<keyword id="KW-1185">Reference proteome</keyword>
<keyword id="KW-0678">Repressor</keyword>
<keyword id="KW-1277">Toxin-antitoxin system</keyword>
<keyword id="KW-0808">Transferase</keyword>
<keyword id="KW-0843">Virulence</keyword>
<reference key="1">
    <citation type="journal article" date="2001" name="Science">
        <title>Complete genome sequence of a virulent isolate of Streptococcus pneumoniae.</title>
        <authorList>
            <person name="Tettelin H."/>
            <person name="Nelson K.E."/>
            <person name="Paulsen I.T."/>
            <person name="Eisen J.A."/>
            <person name="Read T.D."/>
            <person name="Peterson S.N."/>
            <person name="Heidelberg J.F."/>
            <person name="DeBoy R.T."/>
            <person name="Haft D.H."/>
            <person name="Dodson R.J."/>
            <person name="Durkin A.S."/>
            <person name="Gwinn M.L."/>
            <person name="Kolonay J.F."/>
            <person name="Nelson W.C."/>
            <person name="Peterson J.D."/>
            <person name="Umayam L.A."/>
            <person name="White O."/>
            <person name="Salzberg S.L."/>
            <person name="Lewis M.R."/>
            <person name="Radune D."/>
            <person name="Holtzapple E.K."/>
            <person name="Khouri H.M."/>
            <person name="Wolf A.M."/>
            <person name="Utterback T.R."/>
            <person name="Hansen C.L."/>
            <person name="McDonald L.A."/>
            <person name="Feldblyum T.V."/>
            <person name="Angiuoli S.V."/>
            <person name="Dickinson T."/>
            <person name="Hickey E.K."/>
            <person name="Holt I.E."/>
            <person name="Loftus B.J."/>
            <person name="Yang F."/>
            <person name="Smith H.O."/>
            <person name="Venter J.C."/>
            <person name="Dougherty B.A."/>
            <person name="Morrison D.A."/>
            <person name="Hollingshead S.K."/>
            <person name="Fraser C.M."/>
        </authorList>
    </citation>
    <scope>NUCLEOTIDE SEQUENCE [LARGE SCALE GENOMIC DNA]</scope>
    <source>
        <strain>ATCC BAA-334 / TIGR4</strain>
    </source>
</reference>
<reference key="2">
    <citation type="journal article" date="2004" name="Infect. Immun.">
        <title>A locus contained within a variable region of pneumococcal pathogenicity island 1 contributes to virulence in mice.</title>
        <authorList>
            <person name="Brown J.S."/>
            <person name="Gilliland S.M."/>
            <person name="Spratt B.G."/>
            <person name="Holden D.W."/>
        </authorList>
    </citation>
    <scope>DISRUPTION PHENOTYPE</scope>
    <scope>OPERON STRUCTURE</scope>
    <source>
        <strain>0100993 / NCIMB 40794 / Serotype 3</strain>
    </source>
</reference>
<reference key="3">
    <citation type="journal article" date="2010" name="J. Biol. Chem.">
        <title>Assembly dynamics and stability of the pneumococcal epsilon zeta antitoxin toxin (PezAT) system from Streptococcus pneumoniae.</title>
        <authorList>
            <person name="Mutschler H."/>
            <person name="Reinstein J."/>
            <person name="Meinhart A."/>
        </authorList>
    </citation>
    <scope>SUBUNIT</scope>
    <scope>COMPLEX STABILITY</scope>
    <source>
        <strain>ATCC BAA-334 / TIGR4</strain>
    </source>
</reference>
<reference key="4">
    <citation type="journal article" date="2011" name="PLoS Biol.">
        <title>A novel mechanism of programmed cell death in bacteria by toxin-antitoxin systems corrupts peptidoglycan synthesis.</title>
        <authorList>
            <person name="Mutschler H."/>
            <person name="Gebhardt M."/>
            <person name="Shoeman R.L."/>
            <person name="Meinhart A."/>
        </authorList>
    </citation>
    <scope>EXPRESSION IN E.COLI</scope>
    <scope>FUNCTION AS A UNAG KINASE</scope>
    <scope>MUTAGENESIS OF 243-GLY--LYS-253</scope>
    <source>
        <strain>ATCC BAA-334 / TIGR4</strain>
    </source>
</reference>
<reference key="5">
    <citation type="journal article" date="2007" name="J. Biol. Chem.">
        <title>Molecular and structural characterization of the PezAT chromosomal toxin-antitoxin system of the human pathogen Streptococcus pneumoniae.</title>
        <authorList>
            <person name="Khoo S.K."/>
            <person name="Loll B."/>
            <person name="Chan W.T."/>
            <person name="Shoeman R.L."/>
            <person name="Ngoo L."/>
            <person name="Yeo C.C."/>
            <person name="Meinhart A."/>
        </authorList>
    </citation>
    <scope>X-RAY CRYSTALLOGRAPHY (3.20 ANGSTROMS)</scope>
    <scope>EXPRESSION IN E.COLI</scope>
    <scope>FUNCTION AS A TOXIN</scope>
    <scope>FUNCTION AS A TRANSCRIPTIONAL COREPRESSOR</scope>
    <scope>SUBUNIT</scope>
    <scope>OPERON STRUCTURE</scope>
    <scope>MUTAGENESIS OF LYS-45; ASP-66; THR-117; THR-120; ARG-157 AND ARG-170</scope>
    <source>
        <strain>ATCC BAA-334 / TIGR4</strain>
    </source>
</reference>